<gene>
    <name evidence="1" type="primary">erpA</name>
    <name type="ordered locus">BWG_0149</name>
</gene>
<accession>C4ZRP9</accession>
<reference key="1">
    <citation type="journal article" date="2009" name="J. Bacteriol.">
        <title>Genomic sequencing reveals regulatory mutations and recombinational events in the widely used MC4100 lineage of Escherichia coli K-12.</title>
        <authorList>
            <person name="Ferenci T."/>
            <person name="Zhou Z."/>
            <person name="Betteridge T."/>
            <person name="Ren Y."/>
            <person name="Liu Y."/>
            <person name="Feng L."/>
            <person name="Reeves P.R."/>
            <person name="Wang L."/>
        </authorList>
    </citation>
    <scope>NUCLEOTIDE SEQUENCE [LARGE SCALE GENOMIC DNA]</scope>
    <source>
        <strain>K12 / MC4100 / BW2952</strain>
    </source>
</reference>
<dbReference type="EMBL" id="CP001396">
    <property type="protein sequence ID" value="ACR62425.1"/>
    <property type="molecule type" value="Genomic_DNA"/>
</dbReference>
<dbReference type="RefSeq" id="WP_001295564.1">
    <property type="nucleotide sequence ID" value="NC_012759.1"/>
</dbReference>
<dbReference type="SMR" id="C4ZRP9"/>
<dbReference type="GeneID" id="93777270"/>
<dbReference type="KEGG" id="ebw:BWG_0149"/>
<dbReference type="HOGENOM" id="CLU_069054_5_3_6"/>
<dbReference type="GO" id="GO:0005829">
    <property type="term" value="C:cytosol"/>
    <property type="evidence" value="ECO:0007669"/>
    <property type="project" value="TreeGrafter"/>
</dbReference>
<dbReference type="GO" id="GO:0051537">
    <property type="term" value="F:2 iron, 2 sulfur cluster binding"/>
    <property type="evidence" value="ECO:0007669"/>
    <property type="project" value="TreeGrafter"/>
</dbReference>
<dbReference type="GO" id="GO:0051539">
    <property type="term" value="F:4 iron, 4 sulfur cluster binding"/>
    <property type="evidence" value="ECO:0007669"/>
    <property type="project" value="TreeGrafter"/>
</dbReference>
<dbReference type="GO" id="GO:0005506">
    <property type="term" value="F:iron ion binding"/>
    <property type="evidence" value="ECO:0007669"/>
    <property type="project" value="UniProtKB-UniRule"/>
</dbReference>
<dbReference type="GO" id="GO:0016226">
    <property type="term" value="P:iron-sulfur cluster assembly"/>
    <property type="evidence" value="ECO:0007669"/>
    <property type="project" value="UniProtKB-UniRule"/>
</dbReference>
<dbReference type="FunFam" id="2.60.300.12:FF:000002">
    <property type="entry name" value="Iron-sulfur cluster insertion protein ErpA"/>
    <property type="match status" value="1"/>
</dbReference>
<dbReference type="Gene3D" id="2.60.300.12">
    <property type="entry name" value="HesB-like domain"/>
    <property type="match status" value="1"/>
</dbReference>
<dbReference type="HAMAP" id="MF_01380">
    <property type="entry name" value="Fe_S_insert_ErpA"/>
    <property type="match status" value="1"/>
</dbReference>
<dbReference type="InterPro" id="IPR000361">
    <property type="entry name" value="FeS_biogenesis"/>
</dbReference>
<dbReference type="InterPro" id="IPR016092">
    <property type="entry name" value="FeS_cluster_insertion"/>
</dbReference>
<dbReference type="InterPro" id="IPR017870">
    <property type="entry name" value="FeS_cluster_insertion_CS"/>
</dbReference>
<dbReference type="InterPro" id="IPR023063">
    <property type="entry name" value="FeS_cluster_insertion_RrpA"/>
</dbReference>
<dbReference type="InterPro" id="IPR035903">
    <property type="entry name" value="HesB-like_dom_sf"/>
</dbReference>
<dbReference type="NCBIfam" id="TIGR00049">
    <property type="entry name" value="iron-sulfur cluster assembly accessory protein"/>
    <property type="match status" value="1"/>
</dbReference>
<dbReference type="NCBIfam" id="NF010147">
    <property type="entry name" value="PRK13623.1"/>
    <property type="match status" value="1"/>
</dbReference>
<dbReference type="PANTHER" id="PTHR43011">
    <property type="entry name" value="IRON-SULFUR CLUSTER ASSEMBLY 2 HOMOLOG, MITOCHONDRIAL"/>
    <property type="match status" value="1"/>
</dbReference>
<dbReference type="PANTHER" id="PTHR43011:SF1">
    <property type="entry name" value="IRON-SULFUR CLUSTER ASSEMBLY 2 HOMOLOG, MITOCHONDRIAL"/>
    <property type="match status" value="1"/>
</dbReference>
<dbReference type="Pfam" id="PF01521">
    <property type="entry name" value="Fe-S_biosyn"/>
    <property type="match status" value="1"/>
</dbReference>
<dbReference type="SUPFAM" id="SSF89360">
    <property type="entry name" value="HesB-like domain"/>
    <property type="match status" value="1"/>
</dbReference>
<dbReference type="PROSITE" id="PS01152">
    <property type="entry name" value="HESB"/>
    <property type="match status" value="1"/>
</dbReference>
<organism>
    <name type="scientific">Escherichia coli (strain K12 / MC4100 / BW2952)</name>
    <dbReference type="NCBI Taxonomy" id="595496"/>
    <lineage>
        <taxon>Bacteria</taxon>
        <taxon>Pseudomonadati</taxon>
        <taxon>Pseudomonadota</taxon>
        <taxon>Gammaproteobacteria</taxon>
        <taxon>Enterobacterales</taxon>
        <taxon>Enterobacteriaceae</taxon>
        <taxon>Escherichia</taxon>
    </lineage>
</organism>
<evidence type="ECO:0000255" key="1">
    <source>
        <dbReference type="HAMAP-Rule" id="MF_01380"/>
    </source>
</evidence>
<keyword id="KW-0408">Iron</keyword>
<keyword id="KW-0411">Iron-sulfur</keyword>
<keyword id="KW-0479">Metal-binding</keyword>
<protein>
    <recommendedName>
        <fullName evidence="1">Iron-sulfur cluster insertion protein ErpA</fullName>
    </recommendedName>
</protein>
<name>ERPA_ECOBW</name>
<comment type="function">
    <text evidence="1">Required for insertion of 4Fe-4S clusters for at least IspG.</text>
</comment>
<comment type="cofactor">
    <cofactor evidence="1">
        <name>iron-sulfur cluster</name>
        <dbReference type="ChEBI" id="CHEBI:30408"/>
    </cofactor>
    <text evidence="1">Binds 1 iron-sulfur cluster per subunit.</text>
</comment>
<comment type="subunit">
    <text evidence="1">Homodimer.</text>
</comment>
<comment type="similarity">
    <text evidence="1">Belongs to the HesB/IscA family.</text>
</comment>
<feature type="chain" id="PRO_1000215093" description="Iron-sulfur cluster insertion protein ErpA">
    <location>
        <begin position="1"/>
        <end position="114"/>
    </location>
</feature>
<feature type="binding site" evidence="1">
    <location>
        <position position="42"/>
    </location>
    <ligand>
        <name>iron-sulfur cluster</name>
        <dbReference type="ChEBI" id="CHEBI:30408"/>
    </ligand>
</feature>
<feature type="binding site" evidence="1">
    <location>
        <position position="106"/>
    </location>
    <ligand>
        <name>iron-sulfur cluster</name>
        <dbReference type="ChEBI" id="CHEBI:30408"/>
    </ligand>
</feature>
<feature type="binding site" evidence="1">
    <location>
        <position position="108"/>
    </location>
    <ligand>
        <name>iron-sulfur cluster</name>
        <dbReference type="ChEBI" id="CHEBI:30408"/>
    </ligand>
</feature>
<proteinExistence type="inferred from homology"/>
<sequence>MSDDVALPLEFTDAAANKVKSLIADEDNPNLKLRVYITGGGCSGFQYGFTFDDQVNEGDMTIEKQGVGLVVDPMSLQYLVGGSVDYTEGLEGSRFIVTNPNAKSTCGCGSSFSI</sequence>